<evidence type="ECO:0000255" key="1">
    <source>
        <dbReference type="PROSITE-ProRule" id="PRU00175"/>
    </source>
</evidence>
<evidence type="ECO:0000269" key="2">
    <source>
    </source>
</evidence>
<evidence type="ECO:0000305" key="3"/>
<evidence type="ECO:0007744" key="4">
    <source>
    </source>
</evidence>
<dbReference type="EMBL" id="L22015">
    <property type="protein sequence ID" value="AAC04955.2"/>
    <property type="molecule type" value="Genomic_DNA"/>
</dbReference>
<dbReference type="EMBL" id="U44026">
    <property type="protein sequence ID" value="AAB49810.1"/>
    <property type="molecule type" value="Genomic_DNA"/>
</dbReference>
<dbReference type="EMBL" id="BK006935">
    <property type="protein sequence ID" value="DAA06984.1"/>
    <property type="molecule type" value="Genomic_DNA"/>
</dbReference>
<dbReference type="PIR" id="S40899">
    <property type="entry name" value="S40899"/>
</dbReference>
<dbReference type="RefSeq" id="NP_009399.2">
    <property type="nucleotide sequence ID" value="NM_001178149.1"/>
</dbReference>
<dbReference type="PDB" id="8QX8">
    <property type="method" value="EM"/>
    <property type="resolution" value="4.60 A"/>
    <property type="chains" value="F=1-1274"/>
</dbReference>
<dbReference type="PDBsum" id="8QX8"/>
<dbReference type="EMDB" id="EMD-18701"/>
<dbReference type="SMR" id="P39702"/>
<dbReference type="BioGRID" id="31788">
    <property type="interactions" value="616"/>
</dbReference>
<dbReference type="ComplexPortal" id="CPX-1626">
    <property type="entry name" value="CORVET tethering complex"/>
</dbReference>
<dbReference type="DIP" id="DIP-6298N"/>
<dbReference type="FunCoup" id="P39702">
    <property type="interactions" value="122"/>
</dbReference>
<dbReference type="IntAct" id="P39702">
    <property type="interactions" value="16"/>
</dbReference>
<dbReference type="STRING" id="4932.YAL002W"/>
<dbReference type="GlyGen" id="P39702">
    <property type="glycosylation" value="1 site"/>
</dbReference>
<dbReference type="iPTMnet" id="P39702"/>
<dbReference type="PaxDb" id="4932-YAL002W"/>
<dbReference type="PeptideAtlas" id="P39702"/>
<dbReference type="EnsemblFungi" id="YAL002W_mRNA">
    <property type="protein sequence ID" value="YAL002W"/>
    <property type="gene ID" value="YAL002W"/>
</dbReference>
<dbReference type="GeneID" id="851261"/>
<dbReference type="KEGG" id="sce:YAL002W"/>
<dbReference type="AGR" id="SGD:S000000002"/>
<dbReference type="SGD" id="S000000002">
    <property type="gene designation" value="VPS8"/>
</dbReference>
<dbReference type="VEuPathDB" id="FungiDB:YAL002W"/>
<dbReference type="eggNOG" id="KOG2079">
    <property type="taxonomic scope" value="Eukaryota"/>
</dbReference>
<dbReference type="GeneTree" id="ENSGT00390000010672"/>
<dbReference type="HOGENOM" id="CLU_000917_0_1_1"/>
<dbReference type="InParanoid" id="P39702"/>
<dbReference type="OMA" id="NQLFFHQ"/>
<dbReference type="OrthoDB" id="289913at2759"/>
<dbReference type="BioCyc" id="YEAST:G3O-28817-MONOMER"/>
<dbReference type="BioGRID-ORCS" id="851261">
    <property type="hits" value="1 hit in 10 CRISPR screens"/>
</dbReference>
<dbReference type="PRO" id="PR:P39702"/>
<dbReference type="Proteomes" id="UP000002311">
    <property type="component" value="Chromosome I"/>
</dbReference>
<dbReference type="RNAct" id="P39702">
    <property type="molecule type" value="protein"/>
</dbReference>
<dbReference type="GO" id="GO:0033263">
    <property type="term" value="C:CORVET complex"/>
    <property type="evidence" value="ECO:0000314"/>
    <property type="project" value="SGD"/>
</dbReference>
<dbReference type="GO" id="GO:0031901">
    <property type="term" value="C:early endosome membrane"/>
    <property type="evidence" value="ECO:0000314"/>
    <property type="project" value="ComplexPortal"/>
</dbReference>
<dbReference type="GO" id="GO:0005795">
    <property type="term" value="C:Golgi stack"/>
    <property type="evidence" value="ECO:0007669"/>
    <property type="project" value="UniProtKB-SubCell"/>
</dbReference>
<dbReference type="GO" id="GO:0030897">
    <property type="term" value="C:HOPS complex"/>
    <property type="evidence" value="ECO:0000318"/>
    <property type="project" value="GO_Central"/>
</dbReference>
<dbReference type="GO" id="GO:0005770">
    <property type="term" value="C:late endosome"/>
    <property type="evidence" value="ECO:0000314"/>
    <property type="project" value="SGD"/>
</dbReference>
<dbReference type="GO" id="GO:0016020">
    <property type="term" value="C:membrane"/>
    <property type="evidence" value="ECO:0000314"/>
    <property type="project" value="SGD"/>
</dbReference>
<dbReference type="GO" id="GO:0051020">
    <property type="term" value="F:GTPase binding"/>
    <property type="evidence" value="ECO:0000314"/>
    <property type="project" value="SGD"/>
</dbReference>
<dbReference type="GO" id="GO:0043495">
    <property type="term" value="F:protein-membrane adaptor activity"/>
    <property type="evidence" value="ECO:0000315"/>
    <property type="project" value="SGD"/>
</dbReference>
<dbReference type="GO" id="GO:0008270">
    <property type="term" value="F:zinc ion binding"/>
    <property type="evidence" value="ECO:0007669"/>
    <property type="project" value="UniProtKB-KW"/>
</dbReference>
<dbReference type="GO" id="GO:0034058">
    <property type="term" value="P:endosomal vesicle fusion"/>
    <property type="evidence" value="ECO:0000318"/>
    <property type="project" value="GO_Central"/>
</dbReference>
<dbReference type="GO" id="GO:0032511">
    <property type="term" value="P:late endosome to vacuole transport via multivesicular body sorting pathway"/>
    <property type="evidence" value="ECO:0000315"/>
    <property type="project" value="SGD"/>
</dbReference>
<dbReference type="GO" id="GO:0006623">
    <property type="term" value="P:protein targeting to vacuole"/>
    <property type="evidence" value="ECO:0000315"/>
    <property type="project" value="SGD"/>
</dbReference>
<dbReference type="GO" id="GO:0032889">
    <property type="term" value="P:regulation of vacuole fusion, non-autophagic"/>
    <property type="evidence" value="ECO:0000314"/>
    <property type="project" value="ComplexPortal"/>
</dbReference>
<dbReference type="GO" id="GO:0099022">
    <property type="term" value="P:vesicle tethering"/>
    <property type="evidence" value="ECO:0000314"/>
    <property type="project" value="ComplexPortal"/>
</dbReference>
<dbReference type="CDD" id="cd16484">
    <property type="entry name" value="RING-H2_Vps"/>
    <property type="match status" value="1"/>
</dbReference>
<dbReference type="FunFam" id="2.130.10.10:FF:001333">
    <property type="entry name" value="Vacuolar sorting protein"/>
    <property type="match status" value="1"/>
</dbReference>
<dbReference type="Gene3D" id="2.130.10.10">
    <property type="entry name" value="YVTN repeat-like/Quinoprotein amine dehydrogenase"/>
    <property type="match status" value="1"/>
</dbReference>
<dbReference type="Gene3D" id="3.30.40.10">
    <property type="entry name" value="Zinc/RING finger domain, C3HC4 (zinc finger)"/>
    <property type="match status" value="1"/>
</dbReference>
<dbReference type="InterPro" id="IPR000547">
    <property type="entry name" value="Clathrin_H-chain/VPS_repeat"/>
</dbReference>
<dbReference type="InterPro" id="IPR045111">
    <property type="entry name" value="Vps41/Vps8"/>
</dbReference>
<dbReference type="InterPro" id="IPR025941">
    <property type="entry name" value="Vps8_central_dom"/>
</dbReference>
<dbReference type="InterPro" id="IPR015943">
    <property type="entry name" value="WD40/YVTN_repeat-like_dom_sf"/>
</dbReference>
<dbReference type="InterPro" id="IPR036322">
    <property type="entry name" value="WD40_repeat_dom_sf"/>
</dbReference>
<dbReference type="InterPro" id="IPR001841">
    <property type="entry name" value="Znf_RING"/>
</dbReference>
<dbReference type="InterPro" id="IPR013083">
    <property type="entry name" value="Znf_RING/FYVE/PHD"/>
</dbReference>
<dbReference type="PANTHER" id="PTHR12616">
    <property type="entry name" value="VACUOLAR PROTEIN SORTING VPS41"/>
    <property type="match status" value="1"/>
</dbReference>
<dbReference type="PANTHER" id="PTHR12616:SF8">
    <property type="entry name" value="VACUOLAR PROTEIN SORTING-ASSOCIATED PROTEIN 8 HOMOLOG"/>
    <property type="match status" value="1"/>
</dbReference>
<dbReference type="Pfam" id="PF23410">
    <property type="entry name" value="Beta-prop_VPS8"/>
    <property type="match status" value="1"/>
</dbReference>
<dbReference type="Pfam" id="PF12816">
    <property type="entry name" value="TPR_Vps8"/>
    <property type="match status" value="1"/>
</dbReference>
<dbReference type="Pfam" id="PF25066">
    <property type="entry name" value="TPR_VPS8_2"/>
    <property type="match status" value="1"/>
</dbReference>
<dbReference type="Pfam" id="PF23413">
    <property type="entry name" value="zf_RING_Vps8_fungal"/>
    <property type="match status" value="1"/>
</dbReference>
<dbReference type="SUPFAM" id="SSF57850">
    <property type="entry name" value="RING/U-box"/>
    <property type="match status" value="1"/>
</dbReference>
<dbReference type="SUPFAM" id="SSF50978">
    <property type="entry name" value="WD40 repeat-like"/>
    <property type="match status" value="1"/>
</dbReference>
<dbReference type="PROSITE" id="PS50236">
    <property type="entry name" value="CHCR"/>
    <property type="match status" value="2"/>
</dbReference>
<dbReference type="PROSITE" id="PS50089">
    <property type="entry name" value="ZF_RING_2"/>
    <property type="match status" value="1"/>
</dbReference>
<feature type="chain" id="PRO_0000055901" description="Vacuolar protein sorting-associated protein 8">
    <location>
        <begin position="1"/>
        <end position="1274"/>
    </location>
</feature>
<feature type="repeat" description="WD 1">
    <location>
        <begin position="75"/>
        <end position="119"/>
    </location>
</feature>
<feature type="repeat" description="WD 2">
    <location>
        <begin position="131"/>
        <end position="170"/>
    </location>
</feature>
<feature type="repeat" description="WD 3">
    <location>
        <begin position="193"/>
        <end position="233"/>
    </location>
</feature>
<feature type="repeat" description="CHCR 1">
    <location>
        <begin position="507"/>
        <end position="665"/>
    </location>
</feature>
<feature type="repeat" description="CHCR 2">
    <location>
        <begin position="915"/>
        <end position="1092"/>
    </location>
</feature>
<feature type="zinc finger region" description="RING-type; atypical" evidence="1">
    <location>
        <begin position="1198"/>
        <end position="1266"/>
    </location>
</feature>
<feature type="modified residue" description="N-acetylmethionine" evidence="4">
    <location>
        <position position="1"/>
    </location>
</feature>
<comment type="function">
    <text>Required for localization and recycling of the CPY sorting receptor (VPS10) to the late-Golgi compartment. Involved in the retention of proteins to the late-Golgi. Plays an integral role in the complex vacuolar protein sorting process.</text>
</comment>
<comment type="subcellular location">
    <subcellularLocation>
        <location>Golgi apparatus</location>
        <location>Golgi stack</location>
    </subcellularLocation>
    <text>Associated with the late-Golgi membranes.</text>
</comment>
<comment type="miscellaneous">
    <text evidence="2">Present with 736 molecules/cell in log phase SD medium.</text>
</comment>
<comment type="similarity">
    <text evidence="3">Belongs to the VPS8 family.</text>
</comment>
<organism>
    <name type="scientific">Saccharomyces cerevisiae (strain ATCC 204508 / S288c)</name>
    <name type="common">Baker's yeast</name>
    <dbReference type="NCBI Taxonomy" id="559292"/>
    <lineage>
        <taxon>Eukaryota</taxon>
        <taxon>Fungi</taxon>
        <taxon>Dikarya</taxon>
        <taxon>Ascomycota</taxon>
        <taxon>Saccharomycotina</taxon>
        <taxon>Saccharomycetes</taxon>
        <taxon>Saccharomycetales</taxon>
        <taxon>Saccharomycetaceae</taxon>
        <taxon>Saccharomyces</taxon>
    </lineage>
</organism>
<protein>
    <recommendedName>
        <fullName>Vacuolar protein sorting-associated protein 8</fullName>
    </recommendedName>
    <alternativeName>
        <fullName>Vacuolar protein-targeting protein 8</fullName>
    </alternativeName>
</protein>
<proteinExistence type="evidence at protein level"/>
<accession>P39702</accession>
<accession>D6VPL4</accession>
<sequence>MEQNGLDHDSRSSIDTTINDTQKTFLEFRSYTQLSEKLASSSSYTAPPLNEDGPKGVASAVSQGSESVVSWTTLTHVYSILGAYGGPTCLYPTATYFLMGTSKGCVLIFNYNEHLQTILVPTLSEDPSIHSIRSPVKSIVICSDGTHVAASYETGNICIWNLNVGYRVKPTSEPTNGMTPTPALPAVLHIDDHVNKEITGLDFFGARHTALIVSDRTGKVSLYNGYRRGFWQLVYNSKKILDVNSSKEKLIRSKLSPLISREKISTNLLSVLTTTHFALILLSPHVSLMFQETVEPSVQNSLVVNSSISWTQNCSRVAYSVNNKISVISISSSDFNVQSASHSPEFAESILSIQWIDQLLLGVLTISHQFLVLHPQHDFKILLRLDFLIHDLMIPPNKYFVISRRSFYLLTNYSFKIGKFVSWSDITLRHILKGDYLGALEFIESLLQPYCPLANLLKLDNNTEERTKQLMEPFYNLSLAALRFLIKKDNADYNRVYQLLMVVVRVLQQSSKKLDSIPSLDVFLEQGLEFFELKDNAVYFEVVANIVAQGSVTSISPVLFRSIIDYYAKEENLKVIEDLIIMLNPTTLDVDLAVKLCQKYNLFDLLIYIWNKIFDDYQTPVVDLIYRISNQSEKCVIFNGPQVPPETTIFDYVTYILTGRQYPQNLSISPSDKCSKIQRELSAFIFSGFSIKWPSNSNHKLYICENPEEEPAFPYFHLLLKSNPSRFLAMLNEVFEASLFNDDNDMVASVGEAELVSRQYVIDLLLDAMKDTGNSDNIRVLVAIFIATSISKYPQFIKVSNQALDCVVNTICSSRVQGIYEISQIALESLLPYYHSRTTENFILELKEKNFNKVLFHIYKSENKYASALSLILETKDIEKEYNTDIVSITDYILKKCPPGSLECGKVTEVIETNFDLLLSRIGIEKCVTIFSDFDYNLHQEILEVKNEETQQKYLDKLFSTPNINNKVDKRLRNLHIELNCKYKSKREMILWLNGTVLSNAESLQILDLLNQDSNFEAAAIIHERLESFNLAVRDLLSFIEQCLNEGKTNISTLLESLRRAFDDCNSAGTEKKSCWILLITFLITLYGKYPSHDERKDLCNKLLQEAFLGLVRSKSSSQKDSGGEFWEIMSSVLEHQDVILMKVQDLKQLLLNVFNTYKLERSLSELIQKIIEDSSQDLVQQYRKFLSEGWSIHTDDCEICGKKIWGAGLDPLLFLAWENVQRHQDMISVDLKTPLVIFKCHHGFHQTCLENLAQKPDEYSCLICQTESNPKIV</sequence>
<keyword id="KW-0002">3D-structure</keyword>
<keyword id="KW-0007">Acetylation</keyword>
<keyword id="KW-0333">Golgi apparatus</keyword>
<keyword id="KW-0479">Metal-binding</keyword>
<keyword id="KW-0653">Protein transport</keyword>
<keyword id="KW-1185">Reference proteome</keyword>
<keyword id="KW-0677">Repeat</keyword>
<keyword id="KW-0813">Transport</keyword>
<keyword id="KW-0853">WD repeat</keyword>
<keyword id="KW-0862">Zinc</keyword>
<keyword id="KW-0863">Zinc-finger</keyword>
<gene>
    <name type="primary">VPS8</name>
    <name type="synonym">VPT8</name>
    <name type="ordered locus">YAL002W</name>
    <name type="ORF">FUN15</name>
</gene>
<reference key="1">
    <citation type="journal article" date="1994" name="Yeast">
        <title>Sequencing of chromosome I of Saccharomyces cerevisiae: analysis of the 42 kbp SPO7-CENI-CDC15 region.</title>
        <authorList>
            <person name="Clark M.W."/>
            <person name="Keng T."/>
            <person name="Storms R.K."/>
            <person name="Zhong W.-W."/>
            <person name="Fortin N."/>
            <person name="Zeng B."/>
            <person name="Delaney S."/>
            <person name="Ouellette B.F.F."/>
            <person name="Barton A.B."/>
            <person name="Kaback D.B."/>
            <person name="Bussey H."/>
        </authorList>
    </citation>
    <scope>NUCLEOTIDE SEQUENCE [GENOMIC DNA]</scope>
    <source>
        <strain>ATCC 204511 / S288c / AB972</strain>
    </source>
</reference>
<reference key="2">
    <citation type="journal article" date="1995" name="Proc. Natl. Acad. Sci. U.S.A.">
        <title>The nucleotide sequence of chromosome I from Saccharomyces cerevisiae.</title>
        <authorList>
            <person name="Bussey H."/>
            <person name="Kaback D.B."/>
            <person name="Zhong W.-W."/>
            <person name="Vo D.H."/>
            <person name="Clark M.W."/>
            <person name="Fortin N."/>
            <person name="Hall J."/>
            <person name="Ouellette B.F.F."/>
            <person name="Keng T."/>
            <person name="Barton A.B."/>
            <person name="Su Y."/>
            <person name="Davies C.J."/>
            <person name="Storms R.K."/>
        </authorList>
    </citation>
    <scope>NUCLEOTIDE SEQUENCE [LARGE SCALE GENOMIC DNA]</scope>
    <source>
        <strain>ATCC 204508 / S288c</strain>
    </source>
</reference>
<reference key="3">
    <citation type="submission" date="2004-01" db="EMBL/GenBank/DDBJ databases">
        <authorList>
            <person name="Fisk D."/>
            <person name="Cherry J.M."/>
        </authorList>
    </citation>
    <scope>SEQUENCE REVISION</scope>
</reference>
<reference key="4">
    <citation type="journal article" date="2014" name="G3 (Bethesda)">
        <title>The reference genome sequence of Saccharomyces cerevisiae: Then and now.</title>
        <authorList>
            <person name="Engel S.R."/>
            <person name="Dietrich F.S."/>
            <person name="Fisk D.G."/>
            <person name="Binkley G."/>
            <person name="Balakrishnan R."/>
            <person name="Costanzo M.C."/>
            <person name="Dwight S.S."/>
            <person name="Hitz B.C."/>
            <person name="Karra K."/>
            <person name="Nash R.S."/>
            <person name="Weng S."/>
            <person name="Wong E.D."/>
            <person name="Lloyd P."/>
            <person name="Skrzypek M.S."/>
            <person name="Miyasato S.R."/>
            <person name="Simison M."/>
            <person name="Cherry J.M."/>
        </authorList>
    </citation>
    <scope>GENOME REANNOTATION</scope>
    <source>
        <strain>ATCC 204508 / S288c</strain>
    </source>
</reference>
<reference key="5">
    <citation type="journal article" date="1996" name="Eur. J. Cell Biol.">
        <title>The VPS8 gene is required for localization and trafficking of the CPY sorting receptor in Saccharomyces cerevisiae.</title>
        <authorList>
            <person name="Chen Y.-J."/>
            <person name="Stevens T.H."/>
        </authorList>
    </citation>
    <scope>NUCLEOTIDE SEQUENCE [GENOMIC DNA] OF 99-1274</scope>
</reference>
<reference key="6">
    <citation type="journal article" date="2003" name="Nature">
        <title>Global analysis of protein expression in yeast.</title>
        <authorList>
            <person name="Ghaemmaghami S."/>
            <person name="Huh W.-K."/>
            <person name="Bower K."/>
            <person name="Howson R.W."/>
            <person name="Belle A."/>
            <person name="Dephoure N."/>
            <person name="O'Shea E.K."/>
            <person name="Weissman J.S."/>
        </authorList>
    </citation>
    <scope>LEVEL OF PROTEIN EXPRESSION [LARGE SCALE ANALYSIS]</scope>
</reference>
<reference key="7">
    <citation type="journal article" date="2012" name="Proc. Natl. Acad. Sci. U.S.A.">
        <title>N-terminal acetylome analyses and functional insights of the N-terminal acetyltransferase NatB.</title>
        <authorList>
            <person name="Van Damme P."/>
            <person name="Lasa M."/>
            <person name="Polevoda B."/>
            <person name="Gazquez C."/>
            <person name="Elosegui-Artola A."/>
            <person name="Kim D.S."/>
            <person name="De Juan-Pardo E."/>
            <person name="Demeyer K."/>
            <person name="Hole K."/>
            <person name="Larrea E."/>
            <person name="Timmerman E."/>
            <person name="Prieto J."/>
            <person name="Arnesen T."/>
            <person name="Sherman F."/>
            <person name="Gevaert K."/>
            <person name="Aldabe R."/>
        </authorList>
    </citation>
    <scope>ACETYLATION [LARGE SCALE ANALYSIS] AT MET-1</scope>
    <scope>IDENTIFICATION BY MASS SPECTROMETRY [LARGE SCALE ANALYSIS]</scope>
</reference>
<name>VPS8_YEAST</name>